<keyword id="KW-1185">Reference proteome</keyword>
<keyword id="KW-0687">Ribonucleoprotein</keyword>
<keyword id="KW-0689">Ribosomal protein</keyword>
<keyword id="KW-0694">RNA-binding</keyword>
<keyword id="KW-0699">rRNA-binding</keyword>
<protein>
    <recommendedName>
        <fullName evidence="1">Small ribosomal subunit protein uS11</fullName>
    </recommendedName>
    <alternativeName>
        <fullName evidence="2">30S ribosomal protein S11</fullName>
    </alternativeName>
</protein>
<accession>Q250K6</accession>
<reference key="1">
    <citation type="journal article" date="2006" name="J. Bacteriol.">
        <title>Complete genome sequence of the dehalorespiring bacterium Desulfitobacterium hafniense Y51 and comparison with Dehalococcoides ethenogenes 195.</title>
        <authorList>
            <person name="Nonaka H."/>
            <person name="Keresztes G."/>
            <person name="Shinoda Y."/>
            <person name="Ikenaga Y."/>
            <person name="Abe M."/>
            <person name="Naito K."/>
            <person name="Inatomi K."/>
            <person name="Furukawa K."/>
            <person name="Inui M."/>
            <person name="Yukawa H."/>
        </authorList>
    </citation>
    <scope>NUCLEOTIDE SEQUENCE [LARGE SCALE GENOMIC DNA]</scope>
    <source>
        <strain>Y51</strain>
    </source>
</reference>
<proteinExistence type="inferred from homology"/>
<evidence type="ECO:0000255" key="1">
    <source>
        <dbReference type="HAMAP-Rule" id="MF_01310"/>
    </source>
</evidence>
<evidence type="ECO:0000305" key="2"/>
<comment type="function">
    <text evidence="1">Located on the platform of the 30S subunit, it bridges several disparate RNA helices of the 16S rRNA. Forms part of the Shine-Dalgarno cleft in the 70S ribosome.</text>
</comment>
<comment type="subunit">
    <text evidence="1">Part of the 30S ribosomal subunit. Interacts with proteins S7 and S18. Binds to IF-3.</text>
</comment>
<comment type="similarity">
    <text evidence="1">Belongs to the universal ribosomal protein uS11 family.</text>
</comment>
<dbReference type="EMBL" id="AP008230">
    <property type="protein sequence ID" value="BAE82286.1"/>
    <property type="molecule type" value="Genomic_DNA"/>
</dbReference>
<dbReference type="RefSeq" id="WP_005810114.1">
    <property type="nucleotide sequence ID" value="NC_007907.1"/>
</dbReference>
<dbReference type="SMR" id="Q250K6"/>
<dbReference type="STRING" id="138119.DSY0497"/>
<dbReference type="KEGG" id="dsy:DSY0497"/>
<dbReference type="eggNOG" id="COG0100">
    <property type="taxonomic scope" value="Bacteria"/>
</dbReference>
<dbReference type="HOGENOM" id="CLU_072439_5_0_9"/>
<dbReference type="Proteomes" id="UP000001946">
    <property type="component" value="Chromosome"/>
</dbReference>
<dbReference type="GO" id="GO:1990904">
    <property type="term" value="C:ribonucleoprotein complex"/>
    <property type="evidence" value="ECO:0007669"/>
    <property type="project" value="UniProtKB-KW"/>
</dbReference>
<dbReference type="GO" id="GO:0005840">
    <property type="term" value="C:ribosome"/>
    <property type="evidence" value="ECO:0007669"/>
    <property type="project" value="UniProtKB-KW"/>
</dbReference>
<dbReference type="GO" id="GO:0019843">
    <property type="term" value="F:rRNA binding"/>
    <property type="evidence" value="ECO:0007669"/>
    <property type="project" value="UniProtKB-UniRule"/>
</dbReference>
<dbReference type="GO" id="GO:0003735">
    <property type="term" value="F:structural constituent of ribosome"/>
    <property type="evidence" value="ECO:0007669"/>
    <property type="project" value="InterPro"/>
</dbReference>
<dbReference type="GO" id="GO:0006412">
    <property type="term" value="P:translation"/>
    <property type="evidence" value="ECO:0007669"/>
    <property type="project" value="UniProtKB-UniRule"/>
</dbReference>
<dbReference type="FunFam" id="3.30.420.80:FF:000001">
    <property type="entry name" value="30S ribosomal protein S11"/>
    <property type="match status" value="1"/>
</dbReference>
<dbReference type="Gene3D" id="3.30.420.80">
    <property type="entry name" value="Ribosomal protein S11"/>
    <property type="match status" value="1"/>
</dbReference>
<dbReference type="HAMAP" id="MF_01310">
    <property type="entry name" value="Ribosomal_uS11"/>
    <property type="match status" value="1"/>
</dbReference>
<dbReference type="InterPro" id="IPR001971">
    <property type="entry name" value="Ribosomal_uS11"/>
</dbReference>
<dbReference type="InterPro" id="IPR019981">
    <property type="entry name" value="Ribosomal_uS11_bac-type"/>
</dbReference>
<dbReference type="InterPro" id="IPR018102">
    <property type="entry name" value="Ribosomal_uS11_CS"/>
</dbReference>
<dbReference type="InterPro" id="IPR036967">
    <property type="entry name" value="Ribosomal_uS11_sf"/>
</dbReference>
<dbReference type="NCBIfam" id="NF003698">
    <property type="entry name" value="PRK05309.1"/>
    <property type="match status" value="1"/>
</dbReference>
<dbReference type="NCBIfam" id="TIGR03632">
    <property type="entry name" value="uS11_bact"/>
    <property type="match status" value="1"/>
</dbReference>
<dbReference type="PANTHER" id="PTHR11759">
    <property type="entry name" value="40S RIBOSOMAL PROTEIN S14/30S RIBOSOMAL PROTEIN S11"/>
    <property type="match status" value="1"/>
</dbReference>
<dbReference type="Pfam" id="PF00411">
    <property type="entry name" value="Ribosomal_S11"/>
    <property type="match status" value="1"/>
</dbReference>
<dbReference type="PIRSF" id="PIRSF002131">
    <property type="entry name" value="Ribosomal_S11"/>
    <property type="match status" value="1"/>
</dbReference>
<dbReference type="SUPFAM" id="SSF53137">
    <property type="entry name" value="Translational machinery components"/>
    <property type="match status" value="1"/>
</dbReference>
<dbReference type="PROSITE" id="PS00054">
    <property type="entry name" value="RIBOSOMAL_S11"/>
    <property type="match status" value="1"/>
</dbReference>
<sequence length="129" mass="13882">MARKVVRTKRRERKNIATGVAHIKSTFNNSMVTITDPKGNVISWSSAGALGFKGSRKSTPYAAQMAAETAAKAAMEHGLKEVECFVKGPGAGREAAIRALQAAGLEVNMIKDVTPIPHNGCRPPKRRRV</sequence>
<feature type="chain" id="PRO_0000294746" description="Small ribosomal subunit protein uS11">
    <location>
        <begin position="1"/>
        <end position="129"/>
    </location>
</feature>
<organism>
    <name type="scientific">Desulfitobacterium hafniense (strain Y51)</name>
    <dbReference type="NCBI Taxonomy" id="138119"/>
    <lineage>
        <taxon>Bacteria</taxon>
        <taxon>Bacillati</taxon>
        <taxon>Bacillota</taxon>
        <taxon>Clostridia</taxon>
        <taxon>Eubacteriales</taxon>
        <taxon>Desulfitobacteriaceae</taxon>
        <taxon>Desulfitobacterium</taxon>
    </lineage>
</organism>
<name>RS11_DESHY</name>
<gene>
    <name evidence="1" type="primary">rpsK</name>
    <name type="ordered locus">DSY0497</name>
</gene>